<reference key="1">
    <citation type="journal article" date="2003" name="Proc. Natl. Acad. Sci. U.S.A.">
        <title>The genome of Nanoarchaeum equitans: insights into early archaeal evolution and derived parasitism.</title>
        <authorList>
            <person name="Waters E."/>
            <person name="Hohn M.J."/>
            <person name="Ahel I."/>
            <person name="Graham D.E."/>
            <person name="Adams M.D."/>
            <person name="Barnstead M."/>
            <person name="Beeson K.Y."/>
            <person name="Bibbs L."/>
            <person name="Bolanos R."/>
            <person name="Keller M."/>
            <person name="Kretz K."/>
            <person name="Lin X."/>
            <person name="Mathur E."/>
            <person name="Ni J."/>
            <person name="Podar M."/>
            <person name="Richardson T."/>
            <person name="Sutton G.G."/>
            <person name="Simon M."/>
            <person name="Soell D."/>
            <person name="Stetter K.O."/>
            <person name="Short J.M."/>
            <person name="Noorderwier M."/>
        </authorList>
    </citation>
    <scope>NUCLEOTIDE SEQUENCE [LARGE SCALE GENOMIC DNA]</scope>
    <source>
        <strain>Kin4-M</strain>
    </source>
</reference>
<proteinExistence type="inferred from homology"/>
<organism>
    <name type="scientific">Nanoarchaeum equitans (strain Kin4-M)</name>
    <dbReference type="NCBI Taxonomy" id="228908"/>
    <lineage>
        <taxon>Archaea</taxon>
        <taxon>Nanobdellota</taxon>
        <taxon>Candidatus Nanoarchaeia</taxon>
        <taxon>Nanoarchaeales</taxon>
        <taxon>Nanoarchaeaceae</taxon>
        <taxon>Nanoarchaeum</taxon>
    </lineage>
</organism>
<comment type="function">
    <text evidence="1">Required for the formation of a threonylcarbamoyl group on adenosine at position 37 (t(6)A37) in tRNAs that read codons beginning with adenine. Is probably involved in the transfer of the threonylcarbamoyl moiety of threonylcarbamoyl-AMP (TC-AMP) to the N6 group of A37.</text>
</comment>
<comment type="catalytic activity">
    <reaction evidence="1">
        <text>L-threonylcarbamoyladenylate + adenosine(37) in tRNA = N(6)-L-threonylcarbamoyladenosine(37) in tRNA + AMP + H(+)</text>
        <dbReference type="Rhea" id="RHEA:37059"/>
        <dbReference type="Rhea" id="RHEA-COMP:10162"/>
        <dbReference type="Rhea" id="RHEA-COMP:10163"/>
        <dbReference type="ChEBI" id="CHEBI:15378"/>
        <dbReference type="ChEBI" id="CHEBI:73682"/>
        <dbReference type="ChEBI" id="CHEBI:74411"/>
        <dbReference type="ChEBI" id="CHEBI:74418"/>
        <dbReference type="ChEBI" id="CHEBI:456215"/>
        <dbReference type="EC" id="2.3.1.234"/>
    </reaction>
</comment>
<comment type="cofactor">
    <cofactor evidence="1">
        <name>Fe(2+)</name>
        <dbReference type="ChEBI" id="CHEBI:29033"/>
    </cofactor>
    <text evidence="1">Binds 1 Fe(2+) ion per subunit.</text>
</comment>
<comment type="subcellular location">
    <subcellularLocation>
        <location evidence="1">Cytoplasm</location>
    </subcellularLocation>
</comment>
<comment type="similarity">
    <text evidence="1">Belongs to the KAE1 / TsaD family.</text>
</comment>
<evidence type="ECO:0000255" key="1">
    <source>
        <dbReference type="HAMAP-Rule" id="MF_01446"/>
    </source>
</evidence>
<dbReference type="EC" id="2.3.1.234" evidence="1"/>
<dbReference type="EMBL" id="AE017199">
    <property type="protein sequence ID" value="AAR39335.1"/>
    <property type="molecule type" value="Genomic_DNA"/>
</dbReference>
<dbReference type="SMR" id="Q74M58"/>
<dbReference type="STRING" id="228908.NEQ493"/>
<dbReference type="EnsemblBacteria" id="AAR39335">
    <property type="protein sequence ID" value="AAR39335"/>
    <property type="gene ID" value="NEQ493"/>
</dbReference>
<dbReference type="KEGG" id="neq:NEQ493"/>
<dbReference type="PATRIC" id="fig|228908.8.peg.510"/>
<dbReference type="HOGENOM" id="CLU_023208_2_2_2"/>
<dbReference type="Proteomes" id="UP000000578">
    <property type="component" value="Chromosome"/>
</dbReference>
<dbReference type="GO" id="GO:0005737">
    <property type="term" value="C:cytoplasm"/>
    <property type="evidence" value="ECO:0007669"/>
    <property type="project" value="UniProtKB-SubCell"/>
</dbReference>
<dbReference type="GO" id="GO:0000408">
    <property type="term" value="C:EKC/KEOPS complex"/>
    <property type="evidence" value="ECO:0007669"/>
    <property type="project" value="InterPro"/>
</dbReference>
<dbReference type="GO" id="GO:0005506">
    <property type="term" value="F:iron ion binding"/>
    <property type="evidence" value="ECO:0007669"/>
    <property type="project" value="UniProtKB-UniRule"/>
</dbReference>
<dbReference type="GO" id="GO:0061711">
    <property type="term" value="F:N(6)-L-threonylcarbamoyladenine synthase activity"/>
    <property type="evidence" value="ECO:0007669"/>
    <property type="project" value="UniProtKB-EC"/>
</dbReference>
<dbReference type="GO" id="GO:0002949">
    <property type="term" value="P:tRNA threonylcarbamoyladenosine modification"/>
    <property type="evidence" value="ECO:0007669"/>
    <property type="project" value="UniProtKB-UniRule"/>
</dbReference>
<dbReference type="Gene3D" id="3.30.420.40">
    <property type="match status" value="2"/>
</dbReference>
<dbReference type="HAMAP" id="MF_01446">
    <property type="entry name" value="Kae1"/>
    <property type="match status" value="1"/>
</dbReference>
<dbReference type="InterPro" id="IPR043129">
    <property type="entry name" value="ATPase_NBD"/>
</dbReference>
<dbReference type="InterPro" id="IPR000905">
    <property type="entry name" value="Gcp-like_dom"/>
</dbReference>
<dbReference type="InterPro" id="IPR017861">
    <property type="entry name" value="KAE1/TsaD"/>
</dbReference>
<dbReference type="InterPro" id="IPR034680">
    <property type="entry name" value="Kae1_archaea_euk"/>
</dbReference>
<dbReference type="NCBIfam" id="TIGR03722">
    <property type="entry name" value="arch_KAE1"/>
    <property type="match status" value="1"/>
</dbReference>
<dbReference type="NCBIfam" id="TIGR00329">
    <property type="entry name" value="gcp_kae1"/>
    <property type="match status" value="1"/>
</dbReference>
<dbReference type="PANTHER" id="PTHR11735">
    <property type="entry name" value="TRNA N6-ADENOSINE THREONYLCARBAMOYLTRANSFERASE"/>
    <property type="match status" value="1"/>
</dbReference>
<dbReference type="PANTHER" id="PTHR11735:SF14">
    <property type="entry name" value="TRNA N6-ADENOSINE THREONYLCARBAMOYLTRANSFERASE"/>
    <property type="match status" value="1"/>
</dbReference>
<dbReference type="Pfam" id="PF00814">
    <property type="entry name" value="TsaD"/>
    <property type="match status" value="1"/>
</dbReference>
<dbReference type="PRINTS" id="PR00789">
    <property type="entry name" value="OSIALOPTASE"/>
</dbReference>
<dbReference type="SUPFAM" id="SSF53067">
    <property type="entry name" value="Actin-like ATPase domain"/>
    <property type="match status" value="1"/>
</dbReference>
<sequence length="314" mass="35467">MKVLGIECTAHTFGVGIFDSEKGVLANEKVTYKGYGIHPREAAELHLKEFDKVLLKALEKANISLKDIDLIAVSSGPGLLPTLKLGNYIAVYLGKKLNKPVIGVNHIVAHNEFARYLAKAKDPLFVYVSGANTQFLAIVNNSWFLVGETLDMGVGNLIDKVARDLGLEFPGGPKIEELAKKGKNLIELPYTIKGLNLQLGGIYTYIKRIKDQYSKEDIAYSLQEWVFALILEIAERAMHMLDKKELILTGGVACNNRLNDMAEQMAKENNFKFYRLPCQYLTDNGAMIAYLGYYWYSQGIYYEPKPRPYWRIWI</sequence>
<feature type="chain" id="PRO_0000303636" description="tRNA N6-adenosine threonylcarbamoyltransferase">
    <location>
        <begin position="1"/>
        <end position="314"/>
    </location>
</feature>
<feature type="binding site" evidence="1">
    <location>
        <position position="106"/>
    </location>
    <ligand>
        <name>Fe cation</name>
        <dbReference type="ChEBI" id="CHEBI:24875"/>
    </ligand>
</feature>
<feature type="binding site" evidence="1">
    <location>
        <position position="110"/>
    </location>
    <ligand>
        <name>Fe cation</name>
        <dbReference type="ChEBI" id="CHEBI:24875"/>
    </ligand>
</feature>
<feature type="binding site" evidence="1">
    <location>
        <begin position="127"/>
        <end position="131"/>
    </location>
    <ligand>
        <name>substrate</name>
    </ligand>
</feature>
<feature type="binding site" evidence="1">
    <location>
        <position position="127"/>
    </location>
    <ligand>
        <name>Fe cation</name>
        <dbReference type="ChEBI" id="CHEBI:24875"/>
    </ligand>
</feature>
<feature type="binding site" evidence="1">
    <location>
        <position position="159"/>
    </location>
    <ligand>
        <name>substrate</name>
    </ligand>
</feature>
<feature type="binding site" evidence="1">
    <location>
        <position position="172"/>
    </location>
    <ligand>
        <name>substrate</name>
    </ligand>
</feature>
<feature type="binding site" evidence="1">
    <location>
        <position position="176"/>
    </location>
    <ligand>
        <name>substrate</name>
    </ligand>
</feature>
<feature type="binding site" evidence="1">
    <location>
        <position position="255"/>
    </location>
    <ligand>
        <name>substrate</name>
    </ligand>
</feature>
<feature type="binding site" evidence="1">
    <location>
        <position position="283"/>
    </location>
    <ligand>
        <name>Fe cation</name>
        <dbReference type="ChEBI" id="CHEBI:24875"/>
    </ligand>
</feature>
<accession>Q74M58</accession>
<gene>
    <name evidence="1" type="primary">kae1</name>
    <name type="ordered locus">NEQ493</name>
</gene>
<keyword id="KW-0012">Acyltransferase</keyword>
<keyword id="KW-0963">Cytoplasm</keyword>
<keyword id="KW-0408">Iron</keyword>
<keyword id="KW-0479">Metal-binding</keyword>
<keyword id="KW-1185">Reference proteome</keyword>
<keyword id="KW-0808">Transferase</keyword>
<keyword id="KW-0819">tRNA processing</keyword>
<protein>
    <recommendedName>
        <fullName evidence="1">tRNA N6-adenosine threonylcarbamoyltransferase</fullName>
        <ecNumber evidence="1">2.3.1.234</ecNumber>
    </recommendedName>
    <alternativeName>
        <fullName evidence="1">N6-L-threonylcarbamoyladenine synthase</fullName>
        <shortName evidence="1">t(6)A synthase</shortName>
    </alternativeName>
    <alternativeName>
        <fullName evidence="1">t(6)A37 threonylcarbamoyladenosine biosynthesis protein Kae1</fullName>
    </alternativeName>
    <alternativeName>
        <fullName evidence="1">tRNA threonylcarbamoyladenosine biosynthesis protein Kae1</fullName>
    </alternativeName>
</protein>
<name>KAE1_NANEQ</name>